<dbReference type="EMBL" id="L40822">
    <property type="protein sequence ID" value="AAA75629.1"/>
    <property type="molecule type" value="Genomic_DNA"/>
</dbReference>
<dbReference type="EMBL" id="AE001273">
    <property type="protein sequence ID" value="AAC67973.1"/>
    <property type="molecule type" value="Genomic_DNA"/>
</dbReference>
<dbReference type="PIR" id="I40735">
    <property type="entry name" value="I40735"/>
</dbReference>
<dbReference type="RefSeq" id="NP_219886.1">
    <property type="nucleotide sequence ID" value="NC_000117.1"/>
</dbReference>
<dbReference type="RefSeq" id="WP_009873768.1">
    <property type="nucleotide sequence ID" value="NC_000117.1"/>
</dbReference>
<dbReference type="STRING" id="272561.CT_377"/>
<dbReference type="EnsemblBacteria" id="AAC67973">
    <property type="protein sequence ID" value="AAC67973"/>
    <property type="gene ID" value="CT_377"/>
</dbReference>
<dbReference type="GeneID" id="884737"/>
<dbReference type="KEGG" id="ctr:CT_377"/>
<dbReference type="PATRIC" id="fig|272561.5.peg.406"/>
<dbReference type="HOGENOM" id="CLU_208358_0_0_0"/>
<dbReference type="InParanoid" id="Q46403"/>
<dbReference type="OrthoDB" id="18477at2"/>
<dbReference type="Proteomes" id="UP000000431">
    <property type="component" value="Chromosome"/>
</dbReference>
<dbReference type="InterPro" id="IPR035380">
    <property type="entry name" value="LtuA"/>
</dbReference>
<dbReference type="Pfam" id="PF17446">
    <property type="entry name" value="LtuA"/>
    <property type="match status" value="1"/>
</dbReference>
<protein>
    <recommendedName>
        <fullName>Late transcription unit A protein</fullName>
    </recommendedName>
</protein>
<gene>
    <name type="primary">ltuA</name>
    <name type="ordered locus">CT_377</name>
</gene>
<accession>Q46403</accession>
<proteinExistence type="predicted"/>
<name>LTUA_CHLTR</name>
<reference key="1">
    <citation type="journal article" date="1995" name="J. Bacteriol.">
        <title>Characterization of late gene promoters of Chlamydia trachomatis.</title>
        <authorList>
            <person name="Fahr M.J."/>
            <person name="Douglas A.L."/>
            <person name="Xia W."/>
            <person name="Hatch T.P."/>
        </authorList>
    </citation>
    <scope>NUCLEOTIDE SEQUENCE [GENOMIC DNA]</scope>
    <source>
        <strain>L2/434/Bu</strain>
    </source>
</reference>
<reference key="2">
    <citation type="journal article" date="1998" name="Science">
        <title>Genome sequence of an obligate intracellular pathogen of humans: Chlamydia trachomatis.</title>
        <authorList>
            <person name="Stephens R.S."/>
            <person name="Kalman S."/>
            <person name="Lammel C.J."/>
            <person name="Fan J."/>
            <person name="Marathe R."/>
            <person name="Aravind L."/>
            <person name="Mitchell W.P."/>
            <person name="Olinger L."/>
            <person name="Tatusov R.L."/>
            <person name="Zhao Q."/>
            <person name="Koonin E.V."/>
            <person name="Davis R.W."/>
        </authorList>
    </citation>
    <scope>NUCLEOTIDE SEQUENCE [LARGE SCALE GENOMIC DNA]</scope>
    <source>
        <strain>ATCC VR-885 / DSM 19411 / UW-3/Cx</strain>
    </source>
</reference>
<sequence length="46" mass="5251">MFFIRARFIGFLDVHGYLAAKKGQQVMRSGSSIWVGSHGPIFYKVF</sequence>
<keyword id="KW-1185">Reference proteome</keyword>
<feature type="chain" id="PRO_0000084518" description="Late transcription unit A protein">
    <location>
        <begin position="1"/>
        <end position="46"/>
    </location>
</feature>
<organism>
    <name type="scientific">Chlamydia trachomatis serovar D (strain ATCC VR-885 / DSM 19411 / UW-3/Cx)</name>
    <dbReference type="NCBI Taxonomy" id="272561"/>
    <lineage>
        <taxon>Bacteria</taxon>
        <taxon>Pseudomonadati</taxon>
        <taxon>Chlamydiota</taxon>
        <taxon>Chlamydiia</taxon>
        <taxon>Chlamydiales</taxon>
        <taxon>Chlamydiaceae</taxon>
        <taxon>Chlamydia/Chlamydophila group</taxon>
        <taxon>Chlamydia</taxon>
    </lineage>
</organism>